<feature type="chain" id="PRO_0000266554" description="Large ribosomal subunit protein uL14">
    <location>
        <begin position="1"/>
        <end position="123"/>
    </location>
</feature>
<comment type="function">
    <text evidence="1">Binds to 23S rRNA. Forms part of two intersubunit bridges in the 70S ribosome.</text>
</comment>
<comment type="subunit">
    <text evidence="1">Part of the 50S ribosomal subunit. Forms a cluster with proteins L3 and L19. In the 70S ribosome, L14 and L19 interact and together make contacts with the 16S rRNA in bridges B5 and B8.</text>
</comment>
<comment type="similarity">
    <text evidence="1">Belongs to the universal ribosomal protein uL14 family.</text>
</comment>
<organism>
    <name type="scientific">Salmonella typhimurium (strain LT2 / SGSC1412 / ATCC 700720)</name>
    <dbReference type="NCBI Taxonomy" id="99287"/>
    <lineage>
        <taxon>Bacteria</taxon>
        <taxon>Pseudomonadati</taxon>
        <taxon>Pseudomonadota</taxon>
        <taxon>Gammaproteobacteria</taxon>
        <taxon>Enterobacterales</taxon>
        <taxon>Enterobacteriaceae</taxon>
        <taxon>Salmonella</taxon>
    </lineage>
</organism>
<proteinExistence type="inferred from homology"/>
<gene>
    <name evidence="1" type="primary">rplN</name>
    <name type="ordered locus">STM3430</name>
</gene>
<sequence length="123" mass="13568">MIQEQTMLNVADNSGARRVMCIKVLGGSHRRYAGVGDIIKITIKEAIPRGKVKKGDVLKAVVVRTKKGVRRPDGSVIRFDGNACVILNNNSEQPIGTRIFGPVTRELRNEKFMKIISLAPEVL</sequence>
<name>RL14_SALTY</name>
<protein>
    <recommendedName>
        <fullName evidence="1">Large ribosomal subunit protein uL14</fullName>
    </recommendedName>
    <alternativeName>
        <fullName evidence="2">50S ribosomal protein L14</fullName>
    </alternativeName>
</protein>
<dbReference type="EMBL" id="AE006468">
    <property type="protein sequence ID" value="AAL22293.1"/>
    <property type="molecule type" value="Genomic_DNA"/>
</dbReference>
<dbReference type="RefSeq" id="NP_462334.1">
    <property type="nucleotide sequence ID" value="NC_003197.2"/>
</dbReference>
<dbReference type="RefSeq" id="WP_000613954.1">
    <property type="nucleotide sequence ID" value="NC_003197.2"/>
</dbReference>
<dbReference type="SMR" id="Q7CPL5"/>
<dbReference type="STRING" id="99287.STM3430"/>
<dbReference type="PaxDb" id="99287-STM3430"/>
<dbReference type="GeneID" id="1254953"/>
<dbReference type="GeneID" id="98390432"/>
<dbReference type="KEGG" id="stm:STM3430"/>
<dbReference type="PATRIC" id="fig|99287.12.peg.3627"/>
<dbReference type="HOGENOM" id="CLU_095071_2_1_6"/>
<dbReference type="OMA" id="MIQMQTR"/>
<dbReference type="PhylomeDB" id="Q7CPL5"/>
<dbReference type="BioCyc" id="SENT99287:STM3430-MONOMER"/>
<dbReference type="PRO" id="PR:Q7CPL5"/>
<dbReference type="Proteomes" id="UP000001014">
    <property type="component" value="Chromosome"/>
</dbReference>
<dbReference type="GO" id="GO:0022625">
    <property type="term" value="C:cytosolic large ribosomal subunit"/>
    <property type="evidence" value="ECO:0000318"/>
    <property type="project" value="GO_Central"/>
</dbReference>
<dbReference type="GO" id="GO:0070180">
    <property type="term" value="F:large ribosomal subunit rRNA binding"/>
    <property type="evidence" value="ECO:0000318"/>
    <property type="project" value="GO_Central"/>
</dbReference>
<dbReference type="GO" id="GO:0003735">
    <property type="term" value="F:structural constituent of ribosome"/>
    <property type="evidence" value="ECO:0000318"/>
    <property type="project" value="GO_Central"/>
</dbReference>
<dbReference type="GO" id="GO:0006412">
    <property type="term" value="P:translation"/>
    <property type="evidence" value="ECO:0007669"/>
    <property type="project" value="UniProtKB-UniRule"/>
</dbReference>
<dbReference type="CDD" id="cd00337">
    <property type="entry name" value="Ribosomal_uL14"/>
    <property type="match status" value="1"/>
</dbReference>
<dbReference type="FunFam" id="2.40.150.20:FF:000001">
    <property type="entry name" value="50S ribosomal protein L14"/>
    <property type="match status" value="1"/>
</dbReference>
<dbReference type="Gene3D" id="2.40.150.20">
    <property type="entry name" value="Ribosomal protein L14"/>
    <property type="match status" value="1"/>
</dbReference>
<dbReference type="HAMAP" id="MF_01367">
    <property type="entry name" value="Ribosomal_uL14"/>
    <property type="match status" value="1"/>
</dbReference>
<dbReference type="InterPro" id="IPR000218">
    <property type="entry name" value="Ribosomal_uL14"/>
</dbReference>
<dbReference type="InterPro" id="IPR005745">
    <property type="entry name" value="Ribosomal_uL14_bac-type"/>
</dbReference>
<dbReference type="InterPro" id="IPR019972">
    <property type="entry name" value="Ribosomal_uL14_CS"/>
</dbReference>
<dbReference type="InterPro" id="IPR036853">
    <property type="entry name" value="Ribosomal_uL14_sf"/>
</dbReference>
<dbReference type="NCBIfam" id="TIGR01067">
    <property type="entry name" value="rplN_bact"/>
    <property type="match status" value="1"/>
</dbReference>
<dbReference type="PANTHER" id="PTHR11761">
    <property type="entry name" value="50S/60S RIBOSOMAL PROTEIN L14/L23"/>
    <property type="match status" value="1"/>
</dbReference>
<dbReference type="PANTHER" id="PTHR11761:SF3">
    <property type="entry name" value="LARGE RIBOSOMAL SUBUNIT PROTEIN UL14M"/>
    <property type="match status" value="1"/>
</dbReference>
<dbReference type="Pfam" id="PF00238">
    <property type="entry name" value="Ribosomal_L14"/>
    <property type="match status" value="1"/>
</dbReference>
<dbReference type="SMART" id="SM01374">
    <property type="entry name" value="Ribosomal_L14"/>
    <property type="match status" value="1"/>
</dbReference>
<dbReference type="SUPFAM" id="SSF50193">
    <property type="entry name" value="Ribosomal protein L14"/>
    <property type="match status" value="1"/>
</dbReference>
<dbReference type="PROSITE" id="PS00049">
    <property type="entry name" value="RIBOSOMAL_L14"/>
    <property type="match status" value="1"/>
</dbReference>
<evidence type="ECO:0000255" key="1">
    <source>
        <dbReference type="HAMAP-Rule" id="MF_01367"/>
    </source>
</evidence>
<evidence type="ECO:0000305" key="2"/>
<keyword id="KW-1185">Reference proteome</keyword>
<keyword id="KW-0687">Ribonucleoprotein</keyword>
<keyword id="KW-0689">Ribosomal protein</keyword>
<keyword id="KW-0694">RNA-binding</keyword>
<keyword id="KW-0699">rRNA-binding</keyword>
<accession>Q7CPL5</accession>
<reference key="1">
    <citation type="journal article" date="2001" name="Nature">
        <title>Complete genome sequence of Salmonella enterica serovar Typhimurium LT2.</title>
        <authorList>
            <person name="McClelland M."/>
            <person name="Sanderson K.E."/>
            <person name="Spieth J."/>
            <person name="Clifton S.W."/>
            <person name="Latreille P."/>
            <person name="Courtney L."/>
            <person name="Porwollik S."/>
            <person name="Ali J."/>
            <person name="Dante M."/>
            <person name="Du F."/>
            <person name="Hou S."/>
            <person name="Layman D."/>
            <person name="Leonard S."/>
            <person name="Nguyen C."/>
            <person name="Scott K."/>
            <person name="Holmes A."/>
            <person name="Grewal N."/>
            <person name="Mulvaney E."/>
            <person name="Ryan E."/>
            <person name="Sun H."/>
            <person name="Florea L."/>
            <person name="Miller W."/>
            <person name="Stoneking T."/>
            <person name="Nhan M."/>
            <person name="Waterston R."/>
            <person name="Wilson R.K."/>
        </authorList>
    </citation>
    <scope>NUCLEOTIDE SEQUENCE [LARGE SCALE GENOMIC DNA]</scope>
    <source>
        <strain>LT2 / SGSC1412 / ATCC 700720</strain>
    </source>
</reference>